<proteinExistence type="evidence at protein level"/>
<sequence length="15" mass="1297">ASSAAAAXAPSTPLA</sequence>
<dbReference type="EC" id="7.1.2.2"/>
<dbReference type="PIR" id="S21242">
    <property type="entry name" value="S21242"/>
</dbReference>
<dbReference type="Proteomes" id="UP001155700">
    <property type="component" value="Unplaced"/>
</dbReference>
<dbReference type="GO" id="GO:0005743">
    <property type="term" value="C:mitochondrial inner membrane"/>
    <property type="evidence" value="ECO:0007669"/>
    <property type="project" value="UniProtKB-SubCell"/>
</dbReference>
<dbReference type="GO" id="GO:0045259">
    <property type="term" value="C:proton-transporting ATP synthase complex"/>
    <property type="evidence" value="ECO:0007669"/>
    <property type="project" value="UniProtKB-KW"/>
</dbReference>
<dbReference type="GO" id="GO:0005524">
    <property type="term" value="F:ATP binding"/>
    <property type="evidence" value="ECO:0007669"/>
    <property type="project" value="UniProtKB-KW"/>
</dbReference>
<dbReference type="GO" id="GO:0006754">
    <property type="term" value="P:ATP biosynthetic process"/>
    <property type="evidence" value="ECO:0007669"/>
    <property type="project" value="UniProtKB-KW"/>
</dbReference>
<dbReference type="GO" id="GO:1902600">
    <property type="term" value="P:proton transmembrane transport"/>
    <property type="evidence" value="ECO:0007669"/>
    <property type="project" value="UniProtKB-KW"/>
</dbReference>
<accession>P80083</accession>
<organism>
    <name type="scientific">Spinacia oleracea</name>
    <name type="common">Spinach</name>
    <dbReference type="NCBI Taxonomy" id="3562"/>
    <lineage>
        <taxon>Eukaryota</taxon>
        <taxon>Viridiplantae</taxon>
        <taxon>Streptophyta</taxon>
        <taxon>Embryophyta</taxon>
        <taxon>Tracheophyta</taxon>
        <taxon>Spermatophyta</taxon>
        <taxon>Magnoliopsida</taxon>
        <taxon>eudicotyledons</taxon>
        <taxon>Gunneridae</taxon>
        <taxon>Pentapetalae</taxon>
        <taxon>Caryophyllales</taxon>
        <taxon>Chenopodiaceae</taxon>
        <taxon>Chenopodioideae</taxon>
        <taxon>Anserineae</taxon>
        <taxon>Spinacia</taxon>
    </lineage>
</organism>
<reference key="1">
    <citation type="journal article" date="1992" name="Eur. J. Biochem.">
        <title>Plant mitochondrial F0F1 ATP synthase. Identification of the individual subunits and properties of the purified spinach leaf mitochondrial ATP synthase.</title>
        <authorList>
            <person name="Hamasur B."/>
            <person name="Glaser E."/>
        </authorList>
    </citation>
    <scope>PROTEIN SEQUENCE</scope>
    <source>
        <strain>cv. Medania</strain>
        <tissue>Leaf mesophyll</tissue>
    </source>
</reference>
<comment type="function">
    <text>Mitochondrial membrane ATP synthase (F(1)F(0) ATP synthase or Complex V) produces ATP from ADP in the presence of a proton gradient across the membrane which is generated by electron transport complexes of the respiratory chain. F-type ATPases consist of two structural domains, F(1) - containing the extramembraneous catalytic core, and F(0) - containing the membrane proton channel, linked together by a central stalk and a peripheral stalk. During catalysis, ATP synthesis in the catalytic domain of F(1) is coupled via a rotary mechanism of the central stalk subunits to proton translocation. Subunits alpha and beta form the catalytic core in F(1). Rotation of the central stalk against the surrounding alpha(3)beta(3) subunits leads to hydrolysis of ATP in three separate catalytic sites on the beta subunits.</text>
</comment>
<comment type="catalytic activity">
    <reaction evidence="1">
        <text>ATP + H2O + 4 H(+)(in) = ADP + phosphate + 5 H(+)(out)</text>
        <dbReference type="Rhea" id="RHEA:57720"/>
        <dbReference type="ChEBI" id="CHEBI:15377"/>
        <dbReference type="ChEBI" id="CHEBI:15378"/>
        <dbReference type="ChEBI" id="CHEBI:30616"/>
        <dbReference type="ChEBI" id="CHEBI:43474"/>
        <dbReference type="ChEBI" id="CHEBI:456216"/>
        <dbReference type="EC" id="7.1.2.2"/>
    </reaction>
</comment>
<comment type="subunit">
    <text>F-type ATPases have 2 components, CF(1) - the catalytic core - and CF(0) - the membrane proton channel. CF(1) has five subunits: alpha(3), beta(3), gamma(1), delta(1), epsilon(1). CF(0) has three main subunits: a, b and c.</text>
</comment>
<comment type="subcellular location">
    <subcellularLocation>
        <location>Mitochondrion</location>
    </subcellularLocation>
    <subcellularLocation>
        <location>Mitochondrion inner membrane</location>
    </subcellularLocation>
    <text>Peripheral membrane protein.</text>
</comment>
<comment type="similarity">
    <text evidence="2">Belongs to the ATPase alpha/beta chains family.</text>
</comment>
<evidence type="ECO:0000255" key="1">
    <source>
        <dbReference type="PROSITE-ProRule" id="PRU10106"/>
    </source>
</evidence>
<evidence type="ECO:0000305" key="2"/>
<feature type="chain" id="PRO_0000144556" description="ATP synthase subunit beta, mitochondrial">
    <location>
        <begin position="1"/>
        <end position="15" status="greater than"/>
    </location>
</feature>
<feature type="non-terminal residue">
    <location>
        <position position="15"/>
    </location>
</feature>
<keyword id="KW-0066">ATP synthesis</keyword>
<keyword id="KW-0067">ATP-binding</keyword>
<keyword id="KW-0139">CF(1)</keyword>
<keyword id="KW-0903">Direct protein sequencing</keyword>
<keyword id="KW-0375">Hydrogen ion transport</keyword>
<keyword id="KW-0406">Ion transport</keyword>
<keyword id="KW-0472">Membrane</keyword>
<keyword id="KW-0496">Mitochondrion</keyword>
<keyword id="KW-0999">Mitochondrion inner membrane</keyword>
<keyword id="KW-0547">Nucleotide-binding</keyword>
<keyword id="KW-1185">Reference proteome</keyword>
<keyword id="KW-1278">Translocase</keyword>
<keyword id="KW-0813">Transport</keyword>
<gene>
    <name type="primary">ATPB</name>
    <name type="synonym">ATP2</name>
</gene>
<name>ATPBM_SPIOL</name>
<protein>
    <recommendedName>
        <fullName>ATP synthase subunit beta, mitochondrial</fullName>
        <ecNumber>7.1.2.2</ecNumber>
    </recommendedName>
</protein>